<accession>Q9D4H1</accession>
<organism>
    <name type="scientific">Mus musculus</name>
    <name type="common">Mouse</name>
    <dbReference type="NCBI Taxonomy" id="10090"/>
    <lineage>
        <taxon>Eukaryota</taxon>
        <taxon>Metazoa</taxon>
        <taxon>Chordata</taxon>
        <taxon>Craniata</taxon>
        <taxon>Vertebrata</taxon>
        <taxon>Euteleostomi</taxon>
        <taxon>Mammalia</taxon>
        <taxon>Eutheria</taxon>
        <taxon>Euarchontoglires</taxon>
        <taxon>Glires</taxon>
        <taxon>Rodentia</taxon>
        <taxon>Myomorpha</taxon>
        <taxon>Muroidea</taxon>
        <taxon>Muridae</taxon>
        <taxon>Murinae</taxon>
        <taxon>Mus</taxon>
        <taxon>Mus</taxon>
    </lineage>
</organism>
<protein>
    <recommendedName>
        <fullName>Exocyst complex component 2</fullName>
    </recommendedName>
    <alternativeName>
        <fullName>Exocyst complex component Sec5</fullName>
    </alternativeName>
</protein>
<comment type="function">
    <text evidence="2">Component of the exocyst complex involved in the docking of exocytic vesicles with fusion sites on the plasma membrane.</text>
</comment>
<comment type="subunit">
    <text evidence="1 2 4 5">The exocyst complex is composed of EXOC1, EXOC2, EXOC3, EXOC4, EXOC5, EXOC6, EXOC7 and EXOC8 (PubMed:26582389). Interacts with EXOC3L1 (PubMed:18480549). Interacts with GNEFR/DELGEF; this interaction occurs only in the presence of magnesium or manganese and is stimulated by dCTP or GTP (By similarity). Interacts with RALA and RALB (By similarity) (PubMed:18480549). Interacts with ARL13B; regulates ARL13B localization to the cilium membrane.</text>
</comment>
<comment type="subcellular location">
    <subcellularLocation>
        <location evidence="2">Midbody</location>
        <location evidence="2">Midbody ring</location>
    </subcellularLocation>
    <text evidence="2">Recruitment to the midbody does not require RALA, nor RALB. Colocalizes with CNTRL/centriolin at the midbody ring.</text>
</comment>
<comment type="domain">
    <text>Interacts with RALA through the TIG domain.</text>
</comment>
<comment type="similarity">
    <text evidence="6">Belongs to the SEC5 family.</text>
</comment>
<sequence length="924" mass="103959">MSRSRQPPLVTGISPNEGIPWTKVTIRGENLGTGPTDLIGLTICGHNCLLTAEWMSASKIVCRVGQAKNDKGDIIVTTKSGGKGTSTVSFKLLKPEKIGILDQSAVWVDEMNYYDMRTDRNKGIPPLSLRPANPLGIEIEKCKLPQKNLEVLFHGMSADFTSENFSAAWYLIENHSTTSFEQLKMAVTNLKRQANKKSEGSLAYVKGGLSTFFEAQDALSAIHQKLEADGTEKVEGSMTQKLENVLNRASNTADTLFQEVLGRKDKADSTRNALNVLQRFKFLFNLPLNIKRNIQKGDYDVVINDYEKAKSLFGKTEVQVFKKYYAEVEAGIEDLRELLLKKLLETPSTLHDQKRYIRYLSDLHAPGDPAWQCIGAQHKWTLKLMQDCKEGHMKSLKGHPGPHSPMLDLDNDVRPSVLGHLSQTASLKRGSSFQSGRDDTWRYKTPHRVAFVEKLTKLVLSQLPNFWKLWISYVNGSLFSETAEKSGQSERSKNVRQRQNDFKKMIQEVMHSLVKLIRGALLPLSLREGDGRQYGGWEVQAELSGQWLAHVIQTIRLTYESLTALEIPNDMLQIIQDLILDLRIRCIMVTLQHTAEEIKRLAEKEDWVVDNEGLTSLPCQFEQSIVHSLQSLKGVVDCKPGEASVFQQPKTQEEVCQLCINIMQVFIYCLEQLSTKPDADIDTTHLSVDVSSPDLFGSIHEDFSLTSEQRLLIVLSNCCYLERHTFLNIAEHFEKHNFQGIEKITQVSMASLKELDQRLFENYIELKADPIVGSLEPGIYAGYFDWKDCLPPAGVRNYLKEALVNIIAVHAEVFTISKELVPRVLARVVEAVSEELSRLMQCVSSFSRNGALQARLEICALRDTVAIYLTSESRSSFKQALEALPQLASGADKKSLEELLNKFKSSMHLQLTCFQAASPAVMKT</sequence>
<proteinExistence type="evidence at protein level"/>
<evidence type="ECO:0000250" key="1">
    <source>
        <dbReference type="UniProtKB" id="O54921"/>
    </source>
</evidence>
<evidence type="ECO:0000250" key="2">
    <source>
        <dbReference type="UniProtKB" id="Q96KP1"/>
    </source>
</evidence>
<evidence type="ECO:0000255" key="3"/>
<evidence type="ECO:0000269" key="4">
    <source>
    </source>
</evidence>
<evidence type="ECO:0000269" key="5">
    <source>
    </source>
</evidence>
<evidence type="ECO:0000305" key="6"/>
<evidence type="ECO:0007829" key="7">
    <source>
        <dbReference type="PDB" id="1HK6"/>
    </source>
</evidence>
<reference key="1">
    <citation type="journal article" date="2005" name="Science">
        <title>The transcriptional landscape of the mammalian genome.</title>
        <authorList>
            <person name="Carninci P."/>
            <person name="Kasukawa T."/>
            <person name="Katayama S."/>
            <person name="Gough J."/>
            <person name="Frith M.C."/>
            <person name="Maeda N."/>
            <person name="Oyama R."/>
            <person name="Ravasi T."/>
            <person name="Lenhard B."/>
            <person name="Wells C."/>
            <person name="Kodzius R."/>
            <person name="Shimokawa K."/>
            <person name="Bajic V.B."/>
            <person name="Brenner S.E."/>
            <person name="Batalov S."/>
            <person name="Forrest A.R."/>
            <person name="Zavolan M."/>
            <person name="Davis M.J."/>
            <person name="Wilming L.G."/>
            <person name="Aidinis V."/>
            <person name="Allen J.E."/>
            <person name="Ambesi-Impiombato A."/>
            <person name="Apweiler R."/>
            <person name="Aturaliya R.N."/>
            <person name="Bailey T.L."/>
            <person name="Bansal M."/>
            <person name="Baxter L."/>
            <person name="Beisel K.W."/>
            <person name="Bersano T."/>
            <person name="Bono H."/>
            <person name="Chalk A.M."/>
            <person name="Chiu K.P."/>
            <person name="Choudhary V."/>
            <person name="Christoffels A."/>
            <person name="Clutterbuck D.R."/>
            <person name="Crowe M.L."/>
            <person name="Dalla E."/>
            <person name="Dalrymple B.P."/>
            <person name="de Bono B."/>
            <person name="Della Gatta G."/>
            <person name="di Bernardo D."/>
            <person name="Down T."/>
            <person name="Engstrom P."/>
            <person name="Fagiolini M."/>
            <person name="Faulkner G."/>
            <person name="Fletcher C.F."/>
            <person name="Fukushima T."/>
            <person name="Furuno M."/>
            <person name="Futaki S."/>
            <person name="Gariboldi M."/>
            <person name="Georgii-Hemming P."/>
            <person name="Gingeras T.R."/>
            <person name="Gojobori T."/>
            <person name="Green R.E."/>
            <person name="Gustincich S."/>
            <person name="Harbers M."/>
            <person name="Hayashi Y."/>
            <person name="Hensch T.K."/>
            <person name="Hirokawa N."/>
            <person name="Hill D."/>
            <person name="Huminiecki L."/>
            <person name="Iacono M."/>
            <person name="Ikeo K."/>
            <person name="Iwama A."/>
            <person name="Ishikawa T."/>
            <person name="Jakt M."/>
            <person name="Kanapin A."/>
            <person name="Katoh M."/>
            <person name="Kawasawa Y."/>
            <person name="Kelso J."/>
            <person name="Kitamura H."/>
            <person name="Kitano H."/>
            <person name="Kollias G."/>
            <person name="Krishnan S.P."/>
            <person name="Kruger A."/>
            <person name="Kummerfeld S.K."/>
            <person name="Kurochkin I.V."/>
            <person name="Lareau L.F."/>
            <person name="Lazarevic D."/>
            <person name="Lipovich L."/>
            <person name="Liu J."/>
            <person name="Liuni S."/>
            <person name="McWilliam S."/>
            <person name="Madan Babu M."/>
            <person name="Madera M."/>
            <person name="Marchionni L."/>
            <person name="Matsuda H."/>
            <person name="Matsuzawa S."/>
            <person name="Miki H."/>
            <person name="Mignone F."/>
            <person name="Miyake S."/>
            <person name="Morris K."/>
            <person name="Mottagui-Tabar S."/>
            <person name="Mulder N."/>
            <person name="Nakano N."/>
            <person name="Nakauchi H."/>
            <person name="Ng P."/>
            <person name="Nilsson R."/>
            <person name="Nishiguchi S."/>
            <person name="Nishikawa S."/>
            <person name="Nori F."/>
            <person name="Ohara O."/>
            <person name="Okazaki Y."/>
            <person name="Orlando V."/>
            <person name="Pang K.C."/>
            <person name="Pavan W.J."/>
            <person name="Pavesi G."/>
            <person name="Pesole G."/>
            <person name="Petrovsky N."/>
            <person name="Piazza S."/>
            <person name="Reed J."/>
            <person name="Reid J.F."/>
            <person name="Ring B.Z."/>
            <person name="Ringwald M."/>
            <person name="Rost B."/>
            <person name="Ruan Y."/>
            <person name="Salzberg S.L."/>
            <person name="Sandelin A."/>
            <person name="Schneider C."/>
            <person name="Schoenbach C."/>
            <person name="Sekiguchi K."/>
            <person name="Semple C.A."/>
            <person name="Seno S."/>
            <person name="Sessa L."/>
            <person name="Sheng Y."/>
            <person name="Shibata Y."/>
            <person name="Shimada H."/>
            <person name="Shimada K."/>
            <person name="Silva D."/>
            <person name="Sinclair B."/>
            <person name="Sperling S."/>
            <person name="Stupka E."/>
            <person name="Sugiura K."/>
            <person name="Sultana R."/>
            <person name="Takenaka Y."/>
            <person name="Taki K."/>
            <person name="Tammoja K."/>
            <person name="Tan S.L."/>
            <person name="Tang S."/>
            <person name="Taylor M.S."/>
            <person name="Tegner J."/>
            <person name="Teichmann S.A."/>
            <person name="Ueda H.R."/>
            <person name="van Nimwegen E."/>
            <person name="Verardo R."/>
            <person name="Wei C.L."/>
            <person name="Yagi K."/>
            <person name="Yamanishi H."/>
            <person name="Zabarovsky E."/>
            <person name="Zhu S."/>
            <person name="Zimmer A."/>
            <person name="Hide W."/>
            <person name="Bult C."/>
            <person name="Grimmond S.M."/>
            <person name="Teasdale R.D."/>
            <person name="Liu E.T."/>
            <person name="Brusic V."/>
            <person name="Quackenbush J."/>
            <person name="Wahlestedt C."/>
            <person name="Mattick J.S."/>
            <person name="Hume D.A."/>
            <person name="Kai C."/>
            <person name="Sasaki D."/>
            <person name="Tomaru Y."/>
            <person name="Fukuda S."/>
            <person name="Kanamori-Katayama M."/>
            <person name="Suzuki M."/>
            <person name="Aoki J."/>
            <person name="Arakawa T."/>
            <person name="Iida J."/>
            <person name="Imamura K."/>
            <person name="Itoh M."/>
            <person name="Kato T."/>
            <person name="Kawaji H."/>
            <person name="Kawagashira N."/>
            <person name="Kawashima T."/>
            <person name="Kojima M."/>
            <person name="Kondo S."/>
            <person name="Konno H."/>
            <person name="Nakano K."/>
            <person name="Ninomiya N."/>
            <person name="Nishio T."/>
            <person name="Okada M."/>
            <person name="Plessy C."/>
            <person name="Shibata K."/>
            <person name="Shiraki T."/>
            <person name="Suzuki S."/>
            <person name="Tagami M."/>
            <person name="Waki K."/>
            <person name="Watahiki A."/>
            <person name="Okamura-Oho Y."/>
            <person name="Suzuki H."/>
            <person name="Kawai J."/>
            <person name="Hayashizaki Y."/>
        </authorList>
    </citation>
    <scope>NUCLEOTIDE SEQUENCE [LARGE SCALE MRNA]</scope>
    <source>
        <strain>C57BL/6J</strain>
        <tissue>Testis</tissue>
    </source>
</reference>
<reference key="2">
    <citation type="journal article" date="2004" name="Genome Res.">
        <title>The status, quality, and expansion of the NIH full-length cDNA project: the Mammalian Gene Collection (MGC).</title>
        <authorList>
            <consortium name="The MGC Project Team"/>
        </authorList>
    </citation>
    <scope>NUCLEOTIDE SEQUENCE [LARGE SCALE MRNA]</scope>
    <source>
        <strain>C57BL/6J</strain>
        <tissue>Brain</tissue>
    </source>
</reference>
<reference key="3">
    <citation type="journal article" date="2008" name="Biomed. Res.">
        <title>Involvement of Exoc3l, a protein structurally related to the exocyst subunit Sec6, in insulin secretion.</title>
        <authorList>
            <person name="Saito T."/>
            <person name="Shibasaki T."/>
            <person name="Seino S."/>
        </authorList>
    </citation>
    <scope>INTERACTION WITH EXOC3L1</scope>
</reference>
<reference key="4">
    <citation type="journal article" date="2010" name="Cell">
        <title>A tissue-specific atlas of mouse protein phosphorylation and expression.</title>
        <authorList>
            <person name="Huttlin E.L."/>
            <person name="Jedrychowski M.P."/>
            <person name="Elias J.E."/>
            <person name="Goswami T."/>
            <person name="Rad R."/>
            <person name="Beausoleil S.A."/>
            <person name="Villen J."/>
            <person name="Haas W."/>
            <person name="Sowa M.E."/>
            <person name="Gygi S.P."/>
        </authorList>
    </citation>
    <scope>IDENTIFICATION BY MASS SPECTROMETRY [LARGE SCALE ANALYSIS]</scope>
    <source>
        <tissue>Brain</tissue>
        <tissue>Brown adipose tissue</tissue>
        <tissue>Heart</tissue>
        <tissue>Kidney</tissue>
        <tissue>Liver</tissue>
        <tissue>Lung</tissue>
        <tissue>Pancreas</tissue>
        <tissue>Spleen</tissue>
        <tissue>Testis</tissue>
    </source>
</reference>
<reference key="5">
    <citation type="journal article" date="2016" name="Mol. Biol. Cell">
        <title>Arl13b and the exocyst interact synergistically in ciliogenesis.</title>
        <authorList>
            <person name="Seixas C."/>
            <person name="Choi S.Y."/>
            <person name="Polgar N."/>
            <person name="Umberger N.L."/>
            <person name="East M.P."/>
            <person name="Zuo X."/>
            <person name="Moreiras H."/>
            <person name="Ghossoub R."/>
            <person name="Benmerah A."/>
            <person name="Kahn R.A."/>
            <person name="Fogelgren B."/>
            <person name="Caspary T."/>
            <person name="Lipschutz J.H."/>
            <person name="Barral D.C."/>
        </authorList>
    </citation>
    <scope>INTERACTION WITH ARL13B</scope>
    <scope>SUBUNIT</scope>
</reference>
<reference key="6">
    <citation type="journal article" date="2003" name="J. Biol. Chem.">
        <title>Structure of the GTPase-binding domain of Sec5 and elucidation of its Ral binding site.</title>
        <authorList>
            <person name="Mott H.R."/>
            <person name="Nietlispach D."/>
            <person name="Hopkins L.J."/>
            <person name="Mirey G."/>
            <person name="Camonis J.H."/>
            <person name="Owen D."/>
        </authorList>
    </citation>
    <scope>STRUCTURE BY NMR OF RALA-BINDING DOMAIN</scope>
</reference>
<keyword id="KW-0002">3D-structure</keyword>
<keyword id="KW-0007">Acetylation</keyword>
<keyword id="KW-0175">Coiled coil</keyword>
<keyword id="KW-0268">Exocytosis</keyword>
<keyword id="KW-0597">Phosphoprotein</keyword>
<keyword id="KW-0653">Protein transport</keyword>
<keyword id="KW-1185">Reference proteome</keyword>
<keyword id="KW-0813">Transport</keyword>
<gene>
    <name type="primary">Exoc2</name>
    <name type="synonym">Sec5</name>
    <name type="synonym">Sec5l1</name>
</gene>
<feature type="chain" id="PRO_0000118919" description="Exocyst complex component 2">
    <location>
        <begin position="1"/>
        <end position="924"/>
    </location>
</feature>
<feature type="domain" description="IPT/TIG">
    <location>
        <begin position="8"/>
        <end position="93"/>
    </location>
</feature>
<feature type="coiled-coil region" evidence="3">
    <location>
        <begin position="240"/>
        <end position="260"/>
    </location>
</feature>
<feature type="modified residue" description="Phosphoserine" evidence="2">
    <location>
        <position position="431"/>
    </location>
</feature>
<feature type="modified residue" description="Phosphoserine" evidence="2">
    <location>
        <position position="432"/>
    </location>
</feature>
<feature type="modified residue" description="Phosphoserine" evidence="2">
    <location>
        <position position="435"/>
    </location>
</feature>
<feature type="modified residue" description="Phosphothreonine" evidence="2">
    <location>
        <position position="440"/>
    </location>
</feature>
<feature type="modified residue" description="N6-acetyllysine" evidence="2">
    <location>
        <position position="454"/>
    </location>
</feature>
<feature type="strand" evidence="7">
    <location>
        <begin position="9"/>
        <end position="14"/>
    </location>
</feature>
<feature type="strand" evidence="7">
    <location>
        <begin position="22"/>
        <end position="29"/>
    </location>
</feature>
<feature type="turn" evidence="7">
    <location>
        <begin position="35"/>
        <end position="37"/>
    </location>
</feature>
<feature type="strand" evidence="7">
    <location>
        <begin position="41"/>
        <end position="43"/>
    </location>
</feature>
<feature type="turn" evidence="7">
    <location>
        <begin position="49"/>
        <end position="51"/>
    </location>
</feature>
<feature type="strand" evidence="7">
    <location>
        <begin position="56"/>
        <end position="58"/>
    </location>
</feature>
<feature type="strand" evidence="7">
    <location>
        <begin position="60"/>
        <end position="63"/>
    </location>
</feature>
<feature type="strand" evidence="7">
    <location>
        <begin position="69"/>
        <end position="71"/>
    </location>
</feature>
<feature type="strand" evidence="7">
    <location>
        <begin position="73"/>
        <end position="76"/>
    </location>
</feature>
<feature type="strand" evidence="7">
    <location>
        <begin position="79"/>
        <end position="81"/>
    </location>
</feature>
<feature type="strand" evidence="7">
    <location>
        <begin position="85"/>
        <end position="87"/>
    </location>
</feature>
<dbReference type="EMBL" id="AK016532">
    <property type="protein sequence ID" value="BAB30290.1"/>
    <property type="molecule type" value="mRNA"/>
</dbReference>
<dbReference type="EMBL" id="AK050068">
    <property type="protein sequence ID" value="BAC34056.1"/>
    <property type="molecule type" value="mRNA"/>
</dbReference>
<dbReference type="EMBL" id="BC048154">
    <property type="protein sequence ID" value="AAH48154.1"/>
    <property type="molecule type" value="mRNA"/>
</dbReference>
<dbReference type="EMBL" id="BC049102">
    <property type="protein sequence ID" value="AAH49102.1"/>
    <property type="molecule type" value="mRNA"/>
</dbReference>
<dbReference type="CCDS" id="CCDS26420.1"/>
<dbReference type="RefSeq" id="NP_001347022.1">
    <property type="nucleotide sequence ID" value="NM_001360093.1"/>
</dbReference>
<dbReference type="RefSeq" id="NP_079864.1">
    <property type="nucleotide sequence ID" value="NM_025588.2"/>
</dbReference>
<dbReference type="RefSeq" id="XP_006516789.1">
    <property type="nucleotide sequence ID" value="XM_006516726.2"/>
</dbReference>
<dbReference type="RefSeq" id="XP_036014010.1">
    <property type="nucleotide sequence ID" value="XM_036158117.1"/>
</dbReference>
<dbReference type="PDB" id="1HK6">
    <property type="method" value="NMR"/>
    <property type="chains" value="A=5-97"/>
</dbReference>
<dbReference type="PDBsum" id="1HK6"/>
<dbReference type="SMR" id="Q9D4H1"/>
<dbReference type="BioGRID" id="211506">
    <property type="interactions" value="7"/>
</dbReference>
<dbReference type="ComplexPortal" id="CPX-4982">
    <property type="entry name" value="Exocyst, Exoc6 variant"/>
</dbReference>
<dbReference type="ComplexPortal" id="CPX-4983">
    <property type="entry name" value="Exocyst, Exoc6b variant"/>
</dbReference>
<dbReference type="FunCoup" id="Q9D4H1">
    <property type="interactions" value="2841"/>
</dbReference>
<dbReference type="STRING" id="10090.ENSMUSP00000100010"/>
<dbReference type="iPTMnet" id="Q9D4H1"/>
<dbReference type="PhosphoSitePlus" id="Q9D4H1"/>
<dbReference type="SwissPalm" id="Q9D4H1"/>
<dbReference type="PaxDb" id="10090-ENSMUSP00000100010"/>
<dbReference type="PeptideAtlas" id="Q9D4H1"/>
<dbReference type="ProteomicsDB" id="275701"/>
<dbReference type="Pumba" id="Q9D4H1"/>
<dbReference type="Antibodypedia" id="24190">
    <property type="antibodies" value="143 antibodies from 28 providers"/>
</dbReference>
<dbReference type="DNASU" id="66482"/>
<dbReference type="Ensembl" id="ENSMUST00000021785.8">
    <property type="protein sequence ID" value="ENSMUSP00000021785.7"/>
    <property type="gene ID" value="ENSMUSG00000021357.16"/>
</dbReference>
<dbReference type="Ensembl" id="ENSMUST00000102946.8">
    <property type="protein sequence ID" value="ENSMUSP00000100010.2"/>
    <property type="gene ID" value="ENSMUSG00000021357.16"/>
</dbReference>
<dbReference type="GeneID" id="66482"/>
<dbReference type="KEGG" id="mmu:66482"/>
<dbReference type="UCSC" id="uc007pzc.1">
    <property type="organism name" value="mouse"/>
</dbReference>
<dbReference type="AGR" id="MGI:1913732"/>
<dbReference type="CTD" id="55770"/>
<dbReference type="MGI" id="MGI:1913732">
    <property type="gene designation" value="Exoc2"/>
</dbReference>
<dbReference type="VEuPathDB" id="HostDB:ENSMUSG00000021357"/>
<dbReference type="eggNOG" id="KOG2347">
    <property type="taxonomic scope" value="Eukaryota"/>
</dbReference>
<dbReference type="GeneTree" id="ENSGT00390000010872"/>
<dbReference type="HOGENOM" id="CLU_005811_0_0_1"/>
<dbReference type="InParanoid" id="Q9D4H1"/>
<dbReference type="OMA" id="RMWMDVD"/>
<dbReference type="OrthoDB" id="26242at2759"/>
<dbReference type="PhylomeDB" id="Q9D4H1"/>
<dbReference type="TreeFam" id="TF105891"/>
<dbReference type="Reactome" id="R-MMU-264876">
    <property type="pathway name" value="Insulin processing"/>
</dbReference>
<dbReference type="Reactome" id="R-MMU-5620916">
    <property type="pathway name" value="VxPx cargo-targeting to cilium"/>
</dbReference>
<dbReference type="BioGRID-ORCS" id="66482">
    <property type="hits" value="13 hits in 80 CRISPR screens"/>
</dbReference>
<dbReference type="CD-CODE" id="CE726F99">
    <property type="entry name" value="Postsynaptic density"/>
</dbReference>
<dbReference type="ChiTaRS" id="Exoc2">
    <property type="organism name" value="mouse"/>
</dbReference>
<dbReference type="EvolutionaryTrace" id="Q9D4H1"/>
<dbReference type="PRO" id="PR:Q9D4H1"/>
<dbReference type="Proteomes" id="UP000000589">
    <property type="component" value="Chromosome 13"/>
</dbReference>
<dbReference type="RNAct" id="Q9D4H1">
    <property type="molecule type" value="protein"/>
</dbReference>
<dbReference type="Bgee" id="ENSMUSG00000021357">
    <property type="expression patterns" value="Expressed in manus and 238 other cell types or tissues"/>
</dbReference>
<dbReference type="GO" id="GO:0000145">
    <property type="term" value="C:exocyst"/>
    <property type="evidence" value="ECO:0000304"/>
    <property type="project" value="MGI"/>
</dbReference>
<dbReference type="GO" id="GO:0090543">
    <property type="term" value="C:Flemming body"/>
    <property type="evidence" value="ECO:0007669"/>
    <property type="project" value="UniProtKB-SubCell"/>
</dbReference>
<dbReference type="GO" id="GO:0005886">
    <property type="term" value="C:plasma membrane"/>
    <property type="evidence" value="ECO:0000304"/>
    <property type="project" value="Reactome"/>
</dbReference>
<dbReference type="GO" id="GO:0019901">
    <property type="term" value="F:protein kinase binding"/>
    <property type="evidence" value="ECO:0007669"/>
    <property type="project" value="Ensembl"/>
</dbReference>
<dbReference type="GO" id="GO:0031267">
    <property type="term" value="F:small GTPase binding"/>
    <property type="evidence" value="ECO:0000314"/>
    <property type="project" value="MGI"/>
</dbReference>
<dbReference type="GO" id="GO:0006893">
    <property type="term" value="P:Golgi to plasma membrane transport"/>
    <property type="evidence" value="ECO:0007669"/>
    <property type="project" value="Ensembl"/>
</dbReference>
<dbReference type="GO" id="GO:0090148">
    <property type="term" value="P:membrane fission"/>
    <property type="evidence" value="ECO:0000303"/>
    <property type="project" value="ComplexPortal"/>
</dbReference>
<dbReference type="GO" id="GO:0000281">
    <property type="term" value="P:mitotic cytokinesis"/>
    <property type="evidence" value="ECO:0000303"/>
    <property type="project" value="ComplexPortal"/>
</dbReference>
<dbReference type="GO" id="GO:0045921">
    <property type="term" value="P:positive regulation of exocytosis"/>
    <property type="evidence" value="ECO:0000304"/>
    <property type="project" value="MGI"/>
</dbReference>
<dbReference type="GO" id="GO:0015031">
    <property type="term" value="P:protein transport"/>
    <property type="evidence" value="ECO:0007669"/>
    <property type="project" value="UniProtKB-KW"/>
</dbReference>
<dbReference type="GO" id="GO:2000535">
    <property type="term" value="P:regulation of entry of bacterium into host cell"/>
    <property type="evidence" value="ECO:0007669"/>
    <property type="project" value="Ensembl"/>
</dbReference>
<dbReference type="GO" id="GO:0006904">
    <property type="term" value="P:vesicle docking involved in exocytosis"/>
    <property type="evidence" value="ECO:0000303"/>
    <property type="project" value="ComplexPortal"/>
</dbReference>
<dbReference type="GO" id="GO:0090522">
    <property type="term" value="P:vesicle tethering involved in exocytosis"/>
    <property type="evidence" value="ECO:0000303"/>
    <property type="project" value="ComplexPortal"/>
</dbReference>
<dbReference type="CDD" id="cd00603">
    <property type="entry name" value="IPT_PCSR"/>
    <property type="match status" value="1"/>
</dbReference>
<dbReference type="FunFam" id="2.60.40.10:FF:000196">
    <property type="entry name" value="Exocyst complex component 2"/>
    <property type="match status" value="1"/>
</dbReference>
<dbReference type="Gene3D" id="2.60.40.10">
    <property type="entry name" value="Immunoglobulins"/>
    <property type="match status" value="1"/>
</dbReference>
<dbReference type="InterPro" id="IPR029175">
    <property type="entry name" value="EXOC2/Sec5"/>
</dbReference>
<dbReference type="InterPro" id="IPR039481">
    <property type="entry name" value="EXOC2/Sec5_N_dom"/>
</dbReference>
<dbReference type="InterPro" id="IPR013783">
    <property type="entry name" value="Ig-like_fold"/>
</dbReference>
<dbReference type="InterPro" id="IPR014756">
    <property type="entry name" value="Ig_E-set"/>
</dbReference>
<dbReference type="InterPro" id="IPR002909">
    <property type="entry name" value="IPT_dom"/>
</dbReference>
<dbReference type="PANTHER" id="PTHR13043:SF1">
    <property type="entry name" value="EXOCYST COMPLEX COMPONENT 2"/>
    <property type="match status" value="1"/>
</dbReference>
<dbReference type="PANTHER" id="PTHR13043">
    <property type="entry name" value="EXOCYST COMPLEX COMPONENT SEC5"/>
    <property type="match status" value="1"/>
</dbReference>
<dbReference type="Pfam" id="PF15469">
    <property type="entry name" value="Sec5"/>
    <property type="match status" value="1"/>
</dbReference>
<dbReference type="Pfam" id="PF01833">
    <property type="entry name" value="TIG"/>
    <property type="match status" value="1"/>
</dbReference>
<dbReference type="SUPFAM" id="SSF81296">
    <property type="entry name" value="E set domains"/>
    <property type="match status" value="1"/>
</dbReference>
<name>EXOC2_MOUSE</name>